<dbReference type="EMBL" id="X94704">
    <property type="protein sequence ID" value="CAA64365.1"/>
    <property type="molecule type" value="mRNA"/>
</dbReference>
<dbReference type="SMR" id="P78571"/>
<dbReference type="GO" id="GO:0022627">
    <property type="term" value="C:cytosolic small ribosomal subunit"/>
    <property type="evidence" value="ECO:0007669"/>
    <property type="project" value="TreeGrafter"/>
</dbReference>
<dbReference type="GO" id="GO:0005730">
    <property type="term" value="C:nucleolus"/>
    <property type="evidence" value="ECO:0007669"/>
    <property type="project" value="TreeGrafter"/>
</dbReference>
<dbReference type="GO" id="GO:0070181">
    <property type="term" value="F:small ribosomal subunit rRNA binding"/>
    <property type="evidence" value="ECO:0007669"/>
    <property type="project" value="TreeGrafter"/>
</dbReference>
<dbReference type="GO" id="GO:0003735">
    <property type="term" value="F:structural constituent of ribosome"/>
    <property type="evidence" value="ECO:0007669"/>
    <property type="project" value="InterPro"/>
</dbReference>
<dbReference type="GO" id="GO:0006412">
    <property type="term" value="P:translation"/>
    <property type="evidence" value="ECO:0007669"/>
    <property type="project" value="InterPro"/>
</dbReference>
<dbReference type="CDD" id="cd00353">
    <property type="entry name" value="Ribosomal_S15p_S13e"/>
    <property type="match status" value="1"/>
</dbReference>
<dbReference type="FunFam" id="1.10.287.10:FF:000003">
    <property type="entry name" value="40S ribosomal protein S13"/>
    <property type="match status" value="1"/>
</dbReference>
<dbReference type="FunFam" id="4.10.860.130:FF:000001">
    <property type="entry name" value="40S ribosomal protein S13"/>
    <property type="match status" value="1"/>
</dbReference>
<dbReference type="Gene3D" id="4.10.860.130">
    <property type="match status" value="1"/>
</dbReference>
<dbReference type="Gene3D" id="1.10.287.10">
    <property type="entry name" value="S15/NS1, RNA-binding"/>
    <property type="match status" value="1"/>
</dbReference>
<dbReference type="HAMAP" id="MF_01343_A">
    <property type="entry name" value="Ribosomal_uS15_A"/>
    <property type="match status" value="1"/>
</dbReference>
<dbReference type="InterPro" id="IPR000589">
    <property type="entry name" value="Ribosomal_uS15"/>
</dbReference>
<dbReference type="InterPro" id="IPR023029">
    <property type="entry name" value="Ribosomal_uS15_arc_euk"/>
</dbReference>
<dbReference type="InterPro" id="IPR012606">
    <property type="entry name" value="Ribosomal_uS15_N"/>
</dbReference>
<dbReference type="InterPro" id="IPR009068">
    <property type="entry name" value="uS15_NS1_RNA-bd_sf"/>
</dbReference>
<dbReference type="NCBIfam" id="NF006331">
    <property type="entry name" value="PRK08561.1"/>
    <property type="match status" value="1"/>
</dbReference>
<dbReference type="PANTHER" id="PTHR11885">
    <property type="entry name" value="RIBOSOMAL PROTEIN S15P/S13E"/>
    <property type="match status" value="1"/>
</dbReference>
<dbReference type="PANTHER" id="PTHR11885:SF6">
    <property type="entry name" value="SMALL RIBOSOMAL SUBUNIT PROTEIN US15"/>
    <property type="match status" value="1"/>
</dbReference>
<dbReference type="Pfam" id="PF08069">
    <property type="entry name" value="Ribosomal_S13_N"/>
    <property type="match status" value="1"/>
</dbReference>
<dbReference type="Pfam" id="PF00312">
    <property type="entry name" value="Ribosomal_S15"/>
    <property type="match status" value="1"/>
</dbReference>
<dbReference type="SMART" id="SM01386">
    <property type="entry name" value="Ribosomal_S13_N"/>
    <property type="match status" value="1"/>
</dbReference>
<dbReference type="SMART" id="SM01387">
    <property type="entry name" value="Ribosomal_S15"/>
    <property type="match status" value="1"/>
</dbReference>
<dbReference type="SUPFAM" id="SSF47060">
    <property type="entry name" value="S15/NS1 RNA-binding domain"/>
    <property type="match status" value="1"/>
</dbReference>
<dbReference type="PROSITE" id="PS00362">
    <property type="entry name" value="RIBOSOMAL_S15"/>
    <property type="match status" value="1"/>
</dbReference>
<name>RS13_AGABI</name>
<gene>
    <name type="primary">RPS13</name>
</gene>
<protein>
    <recommendedName>
        <fullName evidence="1">Small ribosomal subunit protein uS15</fullName>
    </recommendedName>
    <alternativeName>
        <fullName>40S ribosomal protein S13</fullName>
    </alternativeName>
</protein>
<organism>
    <name type="scientific">Agaricus bisporus</name>
    <name type="common">White button mushroom</name>
    <dbReference type="NCBI Taxonomy" id="5341"/>
    <lineage>
        <taxon>Eukaryota</taxon>
        <taxon>Fungi</taxon>
        <taxon>Dikarya</taxon>
        <taxon>Basidiomycota</taxon>
        <taxon>Agaricomycotina</taxon>
        <taxon>Agaricomycetes</taxon>
        <taxon>Agaricomycetidae</taxon>
        <taxon>Agaricales</taxon>
        <taxon>Agaricineae</taxon>
        <taxon>Agaricaceae</taxon>
        <taxon>Agaricus</taxon>
    </lineage>
</organism>
<reference key="1">
    <citation type="journal article" date="1996" name="Appl. Environ. Microbiol.">
        <title>Isolation of expressed sequence tags of Agaricus bisporus and their assignment to chromosomes.</title>
        <authorList>
            <person name="Sonnenberg A.S.M."/>
            <person name="de Groot P.W.J."/>
            <person name="Schaap P.J."/>
            <person name="Baars J.J.P."/>
            <person name="Visser J."/>
            <person name="van Griensven L.J.L.D."/>
        </authorList>
    </citation>
    <scope>NUCLEOTIDE SEQUENCE [MRNA]</scope>
    <source>
        <strain>Horst U1</strain>
    </source>
</reference>
<comment type="similarity">
    <text evidence="1">Belongs to the universal ribosomal protein uS15 family.</text>
</comment>
<feature type="chain" id="PRO_0000115685" description="Small ribosomal subunit protein uS15">
    <location>
        <begin position="1"/>
        <end position="151"/>
    </location>
</feature>
<proteinExistence type="evidence at transcript level"/>
<evidence type="ECO:0000305" key="1"/>
<keyword id="KW-0687">Ribonucleoprotein</keyword>
<keyword id="KW-0689">Ribosomal protein</keyword>
<accession>P78571</accession>
<sequence length="151" mass="17080">MGRMHAPGKGISSSALPYRRTPPSWLKTTSEEVVEQIVKLARKGLTPSQIGVTLRNSHGIPQVRFVTGNKILRILKSQGLGPSIPEDLWHLIKKAVAVRKHMETNRKDKDSKFRLILIESRIHRLARYYKTKQQIPPTFKYDSATASTLIA</sequence>